<evidence type="ECO:0000250" key="1"/>
<evidence type="ECO:0000255" key="2"/>
<evidence type="ECO:0000255" key="3">
    <source>
        <dbReference type="PROSITE-ProRule" id="PRU01103"/>
    </source>
</evidence>
<evidence type="ECO:0000255" key="4">
    <source>
        <dbReference type="PROSITE-ProRule" id="PRU10094"/>
    </source>
</evidence>
<evidence type="ECO:0000269" key="5">
    <source>
    </source>
</evidence>
<evidence type="ECO:0000305" key="6"/>
<proteinExistence type="evidence at protein level"/>
<keyword id="KW-0064">Aspartyl protease</keyword>
<keyword id="KW-0903">Direct protein sequencing</keyword>
<keyword id="KW-1015">Disulfide bond</keyword>
<keyword id="KW-0325">Glycoprotein</keyword>
<keyword id="KW-0378">Hydrolase</keyword>
<keyword id="KW-0645">Protease</keyword>
<keyword id="KW-1267">Proteomics identification</keyword>
<keyword id="KW-1185">Reference proteome</keyword>
<keyword id="KW-0964">Secreted</keyword>
<keyword id="KW-0732">Signal</keyword>
<keyword id="KW-0865">Zymogen</keyword>
<organism>
    <name type="scientific">Homo sapiens</name>
    <name type="common">Human</name>
    <dbReference type="NCBI Taxonomy" id="9606"/>
    <lineage>
        <taxon>Eukaryota</taxon>
        <taxon>Metazoa</taxon>
        <taxon>Chordata</taxon>
        <taxon>Craniata</taxon>
        <taxon>Vertebrata</taxon>
        <taxon>Euteleostomi</taxon>
        <taxon>Mammalia</taxon>
        <taxon>Eutheria</taxon>
        <taxon>Euarchontoglires</taxon>
        <taxon>Primates</taxon>
        <taxon>Haplorrhini</taxon>
        <taxon>Catarrhini</taxon>
        <taxon>Hominidae</taxon>
        <taxon>Homo</taxon>
    </lineage>
</organism>
<reference key="1">
    <citation type="journal article" date="1998" name="FEBS Lett.">
        <title>Napsins: new human aspartic proteinases. Distinction between two closely related genes.</title>
        <authorList>
            <person name="Tatnell P.J."/>
            <person name="Powell D.J."/>
            <person name="Hill J."/>
            <person name="Smith T.S."/>
            <person name="Tew D.G."/>
            <person name="Kay J."/>
        </authorList>
    </citation>
    <scope>NUCLEOTIDE SEQUENCE [MRNA]</scope>
    <source>
        <tissue>Kidney</tissue>
        <tissue>Lung</tissue>
    </source>
</reference>
<reference key="2">
    <citation type="journal article" date="1999" name="FEBS Lett.">
        <title>Napsin A, a member of the aspartic protease family, is abundantly expressed in normal lung and kidney tissue and is expressed in lung adenocarcinomas.</title>
        <authorList>
            <person name="Chuman Y."/>
            <person name="Bergman A.-C."/>
            <person name="Ueno T."/>
            <person name="Saito S."/>
            <person name="Sakaguchi K."/>
            <person name="Alaiya A.A."/>
            <person name="Franzen B."/>
            <person name="Bergman T."/>
            <person name="Arnott D."/>
            <person name="Auer G."/>
            <person name="Appella E."/>
            <person name="Joernvall H."/>
            <person name="Linder S."/>
        </authorList>
    </citation>
    <scope>NUCLEOTIDE SEQUENCE [MRNA]</scope>
    <scope>PARTIAL PROTEIN SEQUENCE</scope>
    <scope>IDENTIFICATION BY MASS SPECTROMETRY</scope>
    <source>
        <tissue>Fetal lung</tissue>
    </source>
</reference>
<reference key="3">
    <citation type="journal article" date="1999" name="Nature">
        <title>Membrane-anchored aspartyl protease with Alzheimer's disease beta-secretase activity.</title>
        <authorList>
            <person name="Yan R."/>
            <person name="Bienkowski M.J."/>
            <person name="Shuck M.E."/>
            <person name="Miao H."/>
            <person name="Tory M.C."/>
            <person name="Pauley A.M."/>
            <person name="Brashier J.R."/>
            <person name="Stratman N.C."/>
            <person name="Mathews W.R."/>
            <person name="Buhl A.E."/>
            <person name="Carter D.B."/>
            <person name="Tomasselli A.G."/>
            <person name="Parodi L.A."/>
            <person name="Heinrikson R.L."/>
            <person name="Gurney M.E."/>
        </authorList>
    </citation>
    <scope>NUCLEOTIDE SEQUENCE [MRNA]</scope>
</reference>
<reference key="4">
    <citation type="submission" date="1998-10" db="EMBL/GenBank/DDBJ databases">
        <title>New human aspartic proteases napsin 1 and napsin 2: molecular cloning and intracellular localization of napsin 1.</title>
        <authorList>
            <person name="Koelsch G."/>
            <person name="Wu S."/>
            <person name="Henthorn J."/>
            <person name="Tang J."/>
            <person name="Lin X."/>
        </authorList>
    </citation>
    <scope>NUCLEOTIDE SEQUENCE [MRNA]</scope>
    <source>
        <tissue>Liver</tissue>
    </source>
</reference>
<reference key="5">
    <citation type="journal article" date="2004" name="Genome Res.">
        <title>The status, quality, and expansion of the NIH full-length cDNA project: the Mammalian Gene Collection (MGC).</title>
        <authorList>
            <consortium name="The MGC Project Team"/>
        </authorList>
    </citation>
    <scope>NUCLEOTIDE SEQUENCE [LARGE SCALE MRNA]</scope>
    <scope>VARIANT THR-40</scope>
    <source>
        <tissue>Lung</tissue>
    </source>
</reference>
<dbReference type="EC" id="3.4.23.-"/>
<dbReference type="EMBL" id="AF090386">
    <property type="protein sequence ID" value="AAD04917.1"/>
    <property type="molecule type" value="mRNA"/>
</dbReference>
<dbReference type="EMBL" id="AF200345">
    <property type="protein sequence ID" value="AAF17081.1"/>
    <property type="molecule type" value="mRNA"/>
</dbReference>
<dbReference type="EMBL" id="AF098484">
    <property type="protein sequence ID" value="AAD13215.1"/>
    <property type="molecule type" value="mRNA"/>
</dbReference>
<dbReference type="EMBL" id="BC017842">
    <property type="protein sequence ID" value="AAH17842.1"/>
    <property type="molecule type" value="mRNA"/>
</dbReference>
<dbReference type="CCDS" id="CCDS12794.1"/>
<dbReference type="RefSeq" id="NP_004842.1">
    <property type="nucleotide sequence ID" value="NM_004851.3"/>
</dbReference>
<dbReference type="RefSeq" id="XP_011525842.1">
    <property type="nucleotide sequence ID" value="XM_011527540.1"/>
</dbReference>
<dbReference type="RefSeq" id="XP_054178683.1">
    <property type="nucleotide sequence ID" value="XM_054322708.1"/>
</dbReference>
<dbReference type="SMR" id="O96009"/>
<dbReference type="BioGRID" id="114861">
    <property type="interactions" value="11"/>
</dbReference>
<dbReference type="FunCoup" id="O96009">
    <property type="interactions" value="197"/>
</dbReference>
<dbReference type="IntAct" id="O96009">
    <property type="interactions" value="10"/>
</dbReference>
<dbReference type="MINT" id="O96009"/>
<dbReference type="STRING" id="9606.ENSP00000253719"/>
<dbReference type="MEROPS" id="A01.046"/>
<dbReference type="GlyCosmos" id="O96009">
    <property type="glycosylation" value="3 sites, No reported glycans"/>
</dbReference>
<dbReference type="GlyGen" id="O96009">
    <property type="glycosylation" value="3 sites, 76 N-linked glycans (1 site)"/>
</dbReference>
<dbReference type="iPTMnet" id="O96009"/>
<dbReference type="PhosphoSitePlus" id="O96009"/>
<dbReference type="SwissPalm" id="O96009"/>
<dbReference type="BioMuta" id="NAPSA"/>
<dbReference type="MassIVE" id="O96009"/>
<dbReference type="PaxDb" id="9606-ENSP00000253719"/>
<dbReference type="PeptideAtlas" id="O96009"/>
<dbReference type="ProteomicsDB" id="51189"/>
<dbReference type="Antibodypedia" id="3755">
    <property type="antibodies" value="958 antibodies from 41 providers"/>
</dbReference>
<dbReference type="DNASU" id="9476"/>
<dbReference type="Ensembl" id="ENST00000253719.7">
    <property type="protein sequence ID" value="ENSP00000253719.1"/>
    <property type="gene ID" value="ENSG00000131400.9"/>
</dbReference>
<dbReference type="GeneID" id="9476"/>
<dbReference type="KEGG" id="hsa:9476"/>
<dbReference type="MANE-Select" id="ENST00000253719.7">
    <property type="protein sequence ID" value="ENSP00000253719.1"/>
    <property type="RefSeq nucleotide sequence ID" value="NM_004851.3"/>
    <property type="RefSeq protein sequence ID" value="NP_004842.1"/>
</dbReference>
<dbReference type="UCSC" id="uc002prx.4">
    <property type="organism name" value="human"/>
</dbReference>
<dbReference type="AGR" id="HGNC:13395"/>
<dbReference type="CTD" id="9476"/>
<dbReference type="DisGeNET" id="9476"/>
<dbReference type="GeneCards" id="NAPSA"/>
<dbReference type="HGNC" id="HGNC:13395">
    <property type="gene designation" value="NAPSA"/>
</dbReference>
<dbReference type="HPA" id="ENSG00000131400">
    <property type="expression patterns" value="Tissue enriched (lung)"/>
</dbReference>
<dbReference type="MIM" id="605631">
    <property type="type" value="gene"/>
</dbReference>
<dbReference type="neXtProt" id="NX_O96009"/>
<dbReference type="OpenTargets" id="ENSG00000131400"/>
<dbReference type="PharmGKB" id="PA134891814"/>
<dbReference type="VEuPathDB" id="HostDB:ENSG00000131400"/>
<dbReference type="eggNOG" id="KOG1339">
    <property type="taxonomic scope" value="Eukaryota"/>
</dbReference>
<dbReference type="GeneTree" id="ENSGT00940000160179"/>
<dbReference type="InParanoid" id="O96009"/>
<dbReference type="OMA" id="DYVIQIS"/>
<dbReference type="OrthoDB" id="771136at2759"/>
<dbReference type="PAN-GO" id="O96009">
    <property type="GO annotations" value="4 GO annotations based on evolutionary models"/>
</dbReference>
<dbReference type="PhylomeDB" id="O96009"/>
<dbReference type="TreeFam" id="TF314990"/>
<dbReference type="BRENDA" id="3.4.23.B1">
    <property type="organism ID" value="2681"/>
</dbReference>
<dbReference type="PathwayCommons" id="O96009"/>
<dbReference type="Reactome" id="R-HSA-5683826">
    <property type="pathway name" value="Surfactant metabolism"/>
</dbReference>
<dbReference type="SignaLink" id="O96009"/>
<dbReference type="BioGRID-ORCS" id="9476">
    <property type="hits" value="9 hits in 1156 CRISPR screens"/>
</dbReference>
<dbReference type="GeneWiki" id="NAPSA"/>
<dbReference type="GenomeRNAi" id="9476"/>
<dbReference type="Pharos" id="O96009">
    <property type="development level" value="Tbio"/>
</dbReference>
<dbReference type="PRO" id="PR:O96009"/>
<dbReference type="Proteomes" id="UP000005640">
    <property type="component" value="Chromosome 19"/>
</dbReference>
<dbReference type="RNAct" id="O96009">
    <property type="molecule type" value="protein"/>
</dbReference>
<dbReference type="Bgee" id="ENSG00000131400">
    <property type="expression patterns" value="Expressed in lower lobe of lung and 112 other cell types or tissues"/>
</dbReference>
<dbReference type="ExpressionAtlas" id="O96009">
    <property type="expression patterns" value="baseline and differential"/>
</dbReference>
<dbReference type="GO" id="GO:0097208">
    <property type="term" value="C:alveolar lamellar body"/>
    <property type="evidence" value="ECO:0000314"/>
    <property type="project" value="UniProtKB"/>
</dbReference>
<dbReference type="GO" id="GO:0070062">
    <property type="term" value="C:extracellular exosome"/>
    <property type="evidence" value="ECO:0007005"/>
    <property type="project" value="UniProtKB"/>
</dbReference>
<dbReference type="GO" id="GO:0005615">
    <property type="term" value="C:extracellular space"/>
    <property type="evidence" value="ECO:0000314"/>
    <property type="project" value="UniProtKB"/>
</dbReference>
<dbReference type="GO" id="GO:0005764">
    <property type="term" value="C:lysosome"/>
    <property type="evidence" value="ECO:0000314"/>
    <property type="project" value="UniProtKB"/>
</dbReference>
<dbReference type="GO" id="GO:0097486">
    <property type="term" value="C:multivesicular body lumen"/>
    <property type="evidence" value="ECO:0000304"/>
    <property type="project" value="Reactome"/>
</dbReference>
<dbReference type="GO" id="GO:0004190">
    <property type="term" value="F:aspartic-type endopeptidase activity"/>
    <property type="evidence" value="ECO:0000318"/>
    <property type="project" value="GO_Central"/>
</dbReference>
<dbReference type="GO" id="GO:0004175">
    <property type="term" value="F:endopeptidase activity"/>
    <property type="evidence" value="ECO:0000314"/>
    <property type="project" value="UniProtKB"/>
</dbReference>
<dbReference type="GO" id="GO:0008233">
    <property type="term" value="F:peptidase activity"/>
    <property type="evidence" value="ECO:0000314"/>
    <property type="project" value="UniProtKB"/>
</dbReference>
<dbReference type="GO" id="GO:0033619">
    <property type="term" value="P:membrane protein proteolysis"/>
    <property type="evidence" value="ECO:0000314"/>
    <property type="project" value="UniProtKB"/>
</dbReference>
<dbReference type="GO" id="GO:0006508">
    <property type="term" value="P:proteolysis"/>
    <property type="evidence" value="ECO:0000318"/>
    <property type="project" value="GO_Central"/>
</dbReference>
<dbReference type="GO" id="GO:0043129">
    <property type="term" value="P:surfactant homeostasis"/>
    <property type="evidence" value="ECO:0000314"/>
    <property type="project" value="UniProtKB"/>
</dbReference>
<dbReference type="FunFam" id="2.40.70.10:FF:000048">
    <property type="entry name" value="Napsin A aspartic peptidase"/>
    <property type="match status" value="1"/>
</dbReference>
<dbReference type="FunFam" id="2.40.70.10:FF:000066">
    <property type="entry name" value="Napsin A aspartic peptidase"/>
    <property type="match status" value="1"/>
</dbReference>
<dbReference type="Gene3D" id="2.40.70.10">
    <property type="entry name" value="Acid Proteases"/>
    <property type="match status" value="3"/>
</dbReference>
<dbReference type="InterPro" id="IPR001461">
    <property type="entry name" value="Aspartic_peptidase_A1"/>
</dbReference>
<dbReference type="InterPro" id="IPR001969">
    <property type="entry name" value="Aspartic_peptidase_AS"/>
</dbReference>
<dbReference type="InterPro" id="IPR033121">
    <property type="entry name" value="PEPTIDASE_A1"/>
</dbReference>
<dbReference type="InterPro" id="IPR021109">
    <property type="entry name" value="Peptidase_aspartic_dom_sf"/>
</dbReference>
<dbReference type="PANTHER" id="PTHR47966">
    <property type="entry name" value="BETA-SITE APP-CLEAVING ENZYME, ISOFORM A-RELATED"/>
    <property type="match status" value="1"/>
</dbReference>
<dbReference type="PANTHER" id="PTHR47966:SF83">
    <property type="entry name" value="NAPSIN-A"/>
    <property type="match status" value="1"/>
</dbReference>
<dbReference type="Pfam" id="PF00026">
    <property type="entry name" value="Asp"/>
    <property type="match status" value="1"/>
</dbReference>
<dbReference type="PRINTS" id="PR00792">
    <property type="entry name" value="PEPSIN"/>
</dbReference>
<dbReference type="SUPFAM" id="SSF50630">
    <property type="entry name" value="Acid proteases"/>
    <property type="match status" value="1"/>
</dbReference>
<dbReference type="PROSITE" id="PS00141">
    <property type="entry name" value="ASP_PROTEASE"/>
    <property type="match status" value="2"/>
</dbReference>
<dbReference type="PROSITE" id="PS51767">
    <property type="entry name" value="PEPTIDASE_A1"/>
    <property type="match status" value="1"/>
</dbReference>
<accession>O96009</accession>
<accession>Q8WWD9</accession>
<feature type="signal peptide" evidence="2">
    <location>
        <begin position="1"/>
        <end position="25"/>
    </location>
</feature>
<feature type="propeptide" id="PRO_0000025996" description="Activation peptide">
    <location>
        <begin position="26"/>
        <end position="63"/>
    </location>
</feature>
<feature type="chain" id="PRO_0000025997" description="Napsin-A">
    <location>
        <begin position="64"/>
        <end position="420"/>
    </location>
</feature>
<feature type="domain" description="Peptidase A1" evidence="3">
    <location>
        <begin position="78"/>
        <end position="399"/>
    </location>
</feature>
<feature type="active site" evidence="4">
    <location>
        <position position="96"/>
    </location>
</feature>
<feature type="active site" evidence="4">
    <location>
        <position position="283"/>
    </location>
</feature>
<feature type="glycosylation site" description="N-linked (GlcNAc...) asparagine" evidence="2">
    <location>
        <position position="90"/>
    </location>
</feature>
<feature type="glycosylation site" description="N-linked (GlcNAc...) asparagine" evidence="2">
    <location>
        <position position="133"/>
    </location>
</feature>
<feature type="glycosylation site" description="N-linked (GlcNAc...) asparagine" evidence="2">
    <location>
        <position position="336"/>
    </location>
</feature>
<feature type="disulfide bond" evidence="1">
    <location>
        <begin position="109"/>
        <end position="116"/>
    </location>
</feature>
<feature type="disulfide bond" evidence="1">
    <location>
        <begin position="274"/>
        <end position="278"/>
    </location>
</feature>
<feature type="disulfide bond" evidence="1">
    <location>
        <begin position="317"/>
        <end position="354"/>
    </location>
</feature>
<feature type="sequence variant" id="VAR_051510" description="In dbSNP:rs676314." evidence="5">
    <original>I</original>
    <variation>T</variation>
    <location>
        <position position="40"/>
    </location>
</feature>
<feature type="sequence variant" id="VAR_024586" description="In dbSNP:rs11670727.">
    <original>A</original>
    <variation>T</variation>
    <location>
        <position position="310"/>
    </location>
</feature>
<protein>
    <recommendedName>
        <fullName>Napsin-A</fullName>
        <ecNumber>3.4.23.-</ecNumber>
    </recommendedName>
    <alternativeName>
        <fullName>Aspartyl protease 4</fullName>
        <shortName>ASP4</shortName>
        <shortName>Asp 4</shortName>
    </alternativeName>
    <alternativeName>
        <fullName>Napsin-1</fullName>
    </alternativeName>
    <alternativeName>
        <fullName>TA01/TA02</fullName>
    </alternativeName>
</protein>
<sequence length="420" mass="45387">MSPPPLLQPLLLLLPLLNVEPSGATLIRIPLHRVQPGRRILNLLRGWREPAELPKLGAPSPGDKPIFVPLSNYRDVQYFGEIGLGTPPQNFTVAFDTGSSNLWVPSRRCHFFSVPCWLHHRFDPKASSSFQANGTKFAIQYGTGRVDGILSEDKLTIGGIKGASVIFGEALWEPSLVFAFAHFDGILGLGFPILSVEGVRPPMDVLVEQGLLDKPVFSFYLNRDPEEPDGGELVLGGSDPAHYIPPLTFVPVTVPAYWQIHMERVKVGPGLTLCAKGCAAILDTGTSLITGPTEEIRALHAAIGGIPLLAGEYIILCSEIPKLPAVSFLLGGVWFNLTAHDYVIQTTRNGVRLCLSGFQALDVPPPAGPFWILGDVFLGTYVAVFDRGDMKSSARVGLARARTRGADLGWGETAQAQFPG</sequence>
<name>NAPSA_HUMAN</name>
<gene>
    <name type="primary">NAPSA</name>
    <name type="synonym">NAP1</name>
    <name type="synonym">NAPA</name>
</gene>
<comment type="function">
    <text>May be involved in processing of pneumocyte surfactant precursors.</text>
</comment>
<comment type="interaction">
    <interactant intactId="EBI-7196415">
        <id>O96009</id>
    </interactant>
    <interactant intactId="EBI-10245913">
        <id>Q5T7P3</id>
        <label>LCE1B</label>
    </interactant>
    <organismsDiffer>false</organismsDiffer>
    <experiments>3</experiments>
</comment>
<comment type="interaction">
    <interactant intactId="EBI-7196415">
        <id>O96009</id>
    </interactant>
    <interactant intactId="EBI-9394625">
        <id>Q5TA76</id>
        <label>LCE3A</label>
    </interactant>
    <organismsDiffer>false</organismsDiffer>
    <experiments>3</experiments>
</comment>
<comment type="subcellular location">
    <subcellularLocation>
        <location evidence="6">Secreted</location>
    </subcellularLocation>
</comment>
<comment type="tissue specificity">
    <text>Expressed predominantly in adult lung (type II pneumocytes) and kidney and in fetal lung. Low levels in adult spleen and very low levels in peripheral blood leukocytes.</text>
</comment>
<comment type="similarity">
    <text evidence="6">Belongs to the peptidase A1 family.</text>
</comment>